<proteinExistence type="inferred from homology"/>
<comment type="function">
    <text evidence="1">RuBisCO catalyzes two reactions: the carboxylation of D-ribulose 1,5-bisphosphate, the primary event in carbon dioxide fixation, as well as the oxidative fragmentation of the pentose substrate. Both reactions occur simultaneously and in competition at the same active site. Although the small subunit is not catalytic it is essential for maximal activity.</text>
</comment>
<comment type="subunit">
    <text evidence="1">Heterohexadecamer of 8 large and 8 small subunits.</text>
</comment>
<comment type="subcellular location">
    <subcellularLocation>
        <location evidence="1">Plastid</location>
        <location evidence="1">Chloroplast</location>
    </subcellularLocation>
</comment>
<comment type="miscellaneous">
    <text evidence="1">The basic functional RuBisCO is composed of a large chain homodimer in a 'head-to-tail' conformation. In form I RuBisCO this homodimer is arranged in a barrel-like tetramer with the small subunits forming a tetrameric 'cap' on each end of the 'barrel'.</text>
</comment>
<comment type="similarity">
    <text evidence="1">Belongs to the RuBisCO small chain family.</text>
</comment>
<name>RBS2_NICSY</name>
<keyword id="KW-0113">Calvin cycle</keyword>
<keyword id="KW-0120">Carbon dioxide fixation</keyword>
<keyword id="KW-0150">Chloroplast</keyword>
<keyword id="KW-0601">Photorespiration</keyword>
<keyword id="KW-0602">Photosynthesis</keyword>
<keyword id="KW-0934">Plastid</keyword>
<keyword id="KW-1185">Reference proteome</keyword>
<keyword id="KW-0809">Transit peptide</keyword>
<gene>
    <name evidence="1" type="primary">RBCS2</name>
</gene>
<sequence>MAFLIMSSAAAVATGTNAAQASMIAPFTGLKSATSFPVSRKQNLDITSIASNGGRVQCMQVWPPINKKKYETLSYLPDLSEEQLLREVEYLLKNGWVPCLEFETEHGFVYRENNKSPGYYDGRYWTMWKLPMFGCTDATQVLAEVEEAKKAYPQAWIRIIGFDNVRQVQCISFIAYKPEGY</sequence>
<organism>
    <name type="scientific">Nicotiana sylvestris</name>
    <name type="common">Wood tobacco</name>
    <name type="synonym">South American tobacco</name>
    <dbReference type="NCBI Taxonomy" id="4096"/>
    <lineage>
        <taxon>Eukaryota</taxon>
        <taxon>Viridiplantae</taxon>
        <taxon>Streptophyta</taxon>
        <taxon>Embryophyta</taxon>
        <taxon>Tracheophyta</taxon>
        <taxon>Spermatophyta</taxon>
        <taxon>Magnoliopsida</taxon>
        <taxon>eudicotyledons</taxon>
        <taxon>Gunneridae</taxon>
        <taxon>Pentapetalae</taxon>
        <taxon>asterids</taxon>
        <taxon>lamiids</taxon>
        <taxon>Solanales</taxon>
        <taxon>Solanaceae</taxon>
        <taxon>Nicotianoideae</taxon>
        <taxon>Nicotianeae</taxon>
        <taxon>Nicotiana</taxon>
    </lineage>
</organism>
<dbReference type="EMBL" id="X53426">
    <property type="protein sequence ID" value="CAA37516.1"/>
    <property type="molecule type" value="Genomic_DNA"/>
</dbReference>
<dbReference type="PIR" id="S10987">
    <property type="entry name" value="RKNT41"/>
</dbReference>
<dbReference type="SMR" id="P22433"/>
<dbReference type="STRING" id="4096.P22433"/>
<dbReference type="GeneID" id="104210868"/>
<dbReference type="KEGG" id="nsy:104210868"/>
<dbReference type="eggNOG" id="ENOG502QT0M">
    <property type="taxonomic scope" value="Eukaryota"/>
</dbReference>
<dbReference type="OrthoDB" id="8392at4085"/>
<dbReference type="Proteomes" id="UP000189701">
    <property type="component" value="Unplaced"/>
</dbReference>
<dbReference type="GO" id="GO:0009507">
    <property type="term" value="C:chloroplast"/>
    <property type="evidence" value="ECO:0007669"/>
    <property type="project" value="UniProtKB-SubCell"/>
</dbReference>
<dbReference type="GO" id="GO:0016984">
    <property type="term" value="F:ribulose-bisphosphate carboxylase activity"/>
    <property type="evidence" value="ECO:0007669"/>
    <property type="project" value="UniProtKB-UniRule"/>
</dbReference>
<dbReference type="GO" id="GO:0009853">
    <property type="term" value="P:photorespiration"/>
    <property type="evidence" value="ECO:0007669"/>
    <property type="project" value="UniProtKB-KW"/>
</dbReference>
<dbReference type="GO" id="GO:0019253">
    <property type="term" value="P:reductive pentose-phosphate cycle"/>
    <property type="evidence" value="ECO:0007669"/>
    <property type="project" value="UniProtKB-UniRule"/>
</dbReference>
<dbReference type="CDD" id="cd03527">
    <property type="entry name" value="RuBisCO_small"/>
    <property type="match status" value="1"/>
</dbReference>
<dbReference type="FunFam" id="3.30.190.10:FF:000001">
    <property type="entry name" value="Ribulose bisphosphate carboxylase small chain, chloroplastic"/>
    <property type="match status" value="1"/>
</dbReference>
<dbReference type="Gene3D" id="3.30.190.10">
    <property type="entry name" value="Ribulose bisphosphate carboxylase, small subunit"/>
    <property type="match status" value="1"/>
</dbReference>
<dbReference type="HAMAP" id="MF_00859">
    <property type="entry name" value="RuBisCO_S_bact"/>
    <property type="match status" value="1"/>
</dbReference>
<dbReference type="InterPro" id="IPR024681">
    <property type="entry name" value="RuBisCO_ssu"/>
</dbReference>
<dbReference type="InterPro" id="IPR000894">
    <property type="entry name" value="RuBisCO_ssu_dom"/>
</dbReference>
<dbReference type="InterPro" id="IPR024680">
    <property type="entry name" value="RuBisCO_ssu_N"/>
</dbReference>
<dbReference type="InterPro" id="IPR036385">
    <property type="entry name" value="RuBisCO_ssu_sf"/>
</dbReference>
<dbReference type="PANTHER" id="PTHR31262">
    <property type="entry name" value="RIBULOSE BISPHOSPHATE CARBOXYLASE SMALL CHAIN 1, CHLOROPLASTIC"/>
    <property type="match status" value="1"/>
</dbReference>
<dbReference type="PANTHER" id="PTHR31262:SF10">
    <property type="entry name" value="RIBULOSE BISPHOSPHATE CARBOXYLASE SMALL SUBUNIT 1A, CHLOROPLASTIC-RELATED"/>
    <property type="match status" value="1"/>
</dbReference>
<dbReference type="Pfam" id="PF12338">
    <property type="entry name" value="RbcS"/>
    <property type="match status" value="1"/>
</dbReference>
<dbReference type="Pfam" id="PF00101">
    <property type="entry name" value="RuBisCO_small"/>
    <property type="match status" value="1"/>
</dbReference>
<dbReference type="PRINTS" id="PR00152">
    <property type="entry name" value="RUBISCOSMALL"/>
</dbReference>
<dbReference type="SMART" id="SM00961">
    <property type="entry name" value="RuBisCO_small"/>
    <property type="match status" value="1"/>
</dbReference>
<dbReference type="SUPFAM" id="SSF55239">
    <property type="entry name" value="RuBisCO, small subunit"/>
    <property type="match status" value="1"/>
</dbReference>
<protein>
    <recommendedName>
        <fullName evidence="1">Ribulose bisphosphate carboxylase small subunit, chloroplastic 2</fullName>
        <shortName evidence="1">RuBisCO small subunit 2</shortName>
    </recommendedName>
</protein>
<accession>P22433</accession>
<reference key="1">
    <citation type="journal article" date="1990" name="Nucleic Acids Res.">
        <title>Nucleotide sequences of two genes encoding the small subunit of RUBISCO in Nicotiana sylvestris.</title>
        <authorList>
            <person name="Jamet E."/>
            <person name="Fargeas C."/>
            <person name="Durr A."/>
            <person name="Fleck J."/>
        </authorList>
    </citation>
    <scope>NUCLEOTIDE SEQUENCE [GENOMIC DNA]</scope>
</reference>
<evidence type="ECO:0000255" key="1">
    <source>
        <dbReference type="HAMAP-Rule" id="MF_00860"/>
    </source>
</evidence>
<feature type="transit peptide" description="Chloroplast" evidence="1">
    <location>
        <begin position="1"/>
        <end position="57"/>
    </location>
</feature>
<feature type="chain" id="PRO_0000031536" description="Ribulose bisphosphate carboxylase small subunit, chloroplastic 2" evidence="1">
    <location>
        <begin position="58"/>
        <end position="181"/>
    </location>
</feature>